<evidence type="ECO:0000250" key="1"/>
<evidence type="ECO:0000255" key="2"/>
<evidence type="ECO:0000255" key="3">
    <source>
        <dbReference type="PROSITE-ProRule" id="PRU00258"/>
    </source>
</evidence>
<evidence type="ECO:0000255" key="4">
    <source>
        <dbReference type="PROSITE-ProRule" id="PRU01348"/>
    </source>
</evidence>
<evidence type="ECO:0000255" key="5">
    <source>
        <dbReference type="PROSITE-ProRule" id="PRU01363"/>
    </source>
</evidence>
<evidence type="ECO:0000255" key="6">
    <source>
        <dbReference type="PROSITE-ProRule" id="PRU10022"/>
    </source>
</evidence>
<keyword id="KW-0175">Coiled coil</keyword>
<keyword id="KW-0596">Phosphopantetheine</keyword>
<keyword id="KW-0597">Phosphoprotein</keyword>
<keyword id="KW-1185">Reference proteome</keyword>
<keyword id="KW-0808">Transferase</keyword>
<gene>
    <name type="primary">pks24</name>
    <name type="ORF">DDB_G0287119</name>
</gene>
<organism>
    <name type="scientific">Dictyostelium discoideum</name>
    <name type="common">Social amoeba</name>
    <dbReference type="NCBI Taxonomy" id="44689"/>
    <lineage>
        <taxon>Eukaryota</taxon>
        <taxon>Amoebozoa</taxon>
        <taxon>Evosea</taxon>
        <taxon>Eumycetozoa</taxon>
        <taxon>Dictyostelia</taxon>
        <taxon>Dictyosteliales</taxon>
        <taxon>Dictyosteliaceae</taxon>
        <taxon>Dictyostelium</taxon>
    </lineage>
</organism>
<comment type="function">
    <text evidence="1">Probable polyketide synthase.</text>
</comment>
<comment type="cofactor">
    <cofactor evidence="1">
        <name>pantetheine 4'-phosphate</name>
        <dbReference type="ChEBI" id="CHEBI:47942"/>
    </cofactor>
    <text evidence="1">Binds 1 phosphopantetheine covalently.</text>
</comment>
<comment type="domain">
    <text evidence="1">Modular protein that is responsible for the completion of one condensation-processing cycle. The beta-ketoacyl synthase region is responsible for the actual condensation reaction while the acyl/malonyl transferase region is responsible for incorporating carboxylic acids units onto an acyl carrier protein (ACP) domain (By similarity).</text>
</comment>
<comment type="miscellaneous">
    <text>Encoded by one of the numerous copies of polyketide synthase genes and clustered as a pair pks24/pks25 in chromosome 4.</text>
</comment>
<reference key="1">
    <citation type="journal article" date="2005" name="Nature">
        <title>The genome of the social amoeba Dictyostelium discoideum.</title>
        <authorList>
            <person name="Eichinger L."/>
            <person name="Pachebat J.A."/>
            <person name="Gloeckner G."/>
            <person name="Rajandream M.A."/>
            <person name="Sucgang R."/>
            <person name="Berriman M."/>
            <person name="Song J."/>
            <person name="Olsen R."/>
            <person name="Szafranski K."/>
            <person name="Xu Q."/>
            <person name="Tunggal B."/>
            <person name="Kummerfeld S."/>
            <person name="Madera M."/>
            <person name="Konfortov B.A."/>
            <person name="Rivero F."/>
            <person name="Bankier A.T."/>
            <person name="Lehmann R."/>
            <person name="Hamlin N."/>
            <person name="Davies R."/>
            <person name="Gaudet P."/>
            <person name="Fey P."/>
            <person name="Pilcher K."/>
            <person name="Chen G."/>
            <person name="Saunders D."/>
            <person name="Sodergren E.J."/>
            <person name="Davis P."/>
            <person name="Kerhornou A."/>
            <person name="Nie X."/>
            <person name="Hall N."/>
            <person name="Anjard C."/>
            <person name="Hemphill L."/>
            <person name="Bason N."/>
            <person name="Farbrother P."/>
            <person name="Desany B."/>
            <person name="Just E."/>
            <person name="Morio T."/>
            <person name="Rost R."/>
            <person name="Churcher C.M."/>
            <person name="Cooper J."/>
            <person name="Haydock S."/>
            <person name="van Driessche N."/>
            <person name="Cronin A."/>
            <person name="Goodhead I."/>
            <person name="Muzny D.M."/>
            <person name="Mourier T."/>
            <person name="Pain A."/>
            <person name="Lu M."/>
            <person name="Harper D."/>
            <person name="Lindsay R."/>
            <person name="Hauser H."/>
            <person name="James K.D."/>
            <person name="Quiles M."/>
            <person name="Madan Babu M."/>
            <person name="Saito T."/>
            <person name="Buchrieser C."/>
            <person name="Wardroper A."/>
            <person name="Felder M."/>
            <person name="Thangavelu M."/>
            <person name="Johnson D."/>
            <person name="Knights A."/>
            <person name="Loulseged H."/>
            <person name="Mungall K.L."/>
            <person name="Oliver K."/>
            <person name="Price C."/>
            <person name="Quail M.A."/>
            <person name="Urushihara H."/>
            <person name="Hernandez J."/>
            <person name="Rabbinowitsch E."/>
            <person name="Steffen D."/>
            <person name="Sanders M."/>
            <person name="Ma J."/>
            <person name="Kohara Y."/>
            <person name="Sharp S."/>
            <person name="Simmonds M.N."/>
            <person name="Spiegler S."/>
            <person name="Tivey A."/>
            <person name="Sugano S."/>
            <person name="White B."/>
            <person name="Walker D."/>
            <person name="Woodward J.R."/>
            <person name="Winckler T."/>
            <person name="Tanaka Y."/>
            <person name="Shaulsky G."/>
            <person name="Schleicher M."/>
            <person name="Weinstock G.M."/>
            <person name="Rosenthal A."/>
            <person name="Cox E.C."/>
            <person name="Chisholm R.L."/>
            <person name="Gibbs R.A."/>
            <person name="Loomis W.F."/>
            <person name="Platzer M."/>
            <person name="Kay R.R."/>
            <person name="Williams J.G."/>
            <person name="Dear P.H."/>
            <person name="Noegel A.A."/>
            <person name="Barrell B.G."/>
            <person name="Kuspa A."/>
        </authorList>
    </citation>
    <scope>NUCLEOTIDE SEQUENCE [LARGE SCALE GENOMIC DNA]</scope>
    <source>
        <strain>AX4</strain>
    </source>
</reference>
<reference key="2">
    <citation type="journal article" date="2007" name="Bioinformatics">
        <title>Polyketide synthase genes and the natural products potential of Dictyostelium discoideum.</title>
        <authorList>
            <person name="Zucko J."/>
            <person name="Skunca N."/>
            <person name="Curk T."/>
            <person name="Zupan B."/>
            <person name="Long P.F."/>
            <person name="Cullum J."/>
            <person name="Kessin R.H."/>
            <person name="Hranueli D."/>
        </authorList>
    </citation>
    <scope>IDENTIFICATION</scope>
</reference>
<name>PKS24_DICDI</name>
<accession>Q54KU5</accession>
<protein>
    <recommendedName>
        <fullName>Probable polyketide synthase 24</fullName>
        <shortName>dipks24</shortName>
        <ecNumber>2.3.1.-</ecNumber>
    </recommendedName>
</protein>
<sequence>MKQNKINKAEILQVDDKHVEENLVAIVGVGFRLPSGSIENERNNTPQTLWNNLINGFDGVVKTSERFNDNFFKNHEIANNYSGLLPLDEVKSFDPLFFGINPNEAPTIDPIQRLLLKCTWEALEDSLIDPISIKGTDTSVFIGCTESDYHNINKNEVKSNVFSSLNHAISNRISYCYDLHGNSITLDTACSSSLNAIALGYDSIKNKKSKMSIVGGVNILLDSYFFKAYSSLNILSKSNGRCKSFDASADGYVRSECIGVVVLKNLKDAIKDGNRIYCTINGASANVDGIGYSDKSNFYSPSSISQSENLKNAIQSTNGTVKPSDIDYVEAHGTGTPTGDPIEVEGISKVFKDTRSTDTPLLIGSFKSNIGHCEAASGIASLIKCCLMYKNKCFAPNIHFKTPNPAIKFKEWNLKVVTEPIPFNKFKNTSMVVNNFGATGSNCCLVLSQFNYNTINNNINNHNNNHNHNHNHNNIKINNYLIPFSANSVESLKKYQSLIIENKEYESQYSFEEFVKNQIYNKSTSLYQRSVIVAKDWNDFNNVENQVKYQTSSSTSSNITITNKNNNPITVFVFCGQGSQYNTMALELYKNEKVFRNSMDMLDNKMKNYFGYSILEKLRAIQDSDKCSVHEQTMAQPSTVIIQVSLYELYKHWGIKASFMLGHSLGEVTTAYCSGMIDIDQLCYLIYHRSTLQIRTNGSGKMLSINISSDEYKTNYMSRYPTIEIACYNSPSSIVIAGNEQILNEISKELKEKEIFSAMLGSLSSFHTSSQNIIKDDILNLNIQSSQPVIPTFSTVTSNLFNESTIFDSEYFFDNISKPVSFTQTISNLYKHIEDNQIGSNIVFIEIAPHPTLSFYLKQMIPKQSQYFRNGESISVYSTLHKKKNDVEEFQKSISQLFCDDAYDINFKCQFNNINSNIEAISNFNLPLYQWDDQHYWLNKSIEHKNNLIGPPISILGNSMQDSNPFIKSYQTIIDTGKDAFKYLKGHNVSDKCYFPGTGYIDNIFKLYPNQDLTINSIEFKVPFVLTDGIGQCLQTNVYQTGKSEYRAQFHLKDEMNNQWINTSNSNFHLNSNDNYHEEKQKLDIQDIKQTKCNLSSIPWDEFYSLMKTQLGANFYGIFSKVVECYIGDNCSLTEISLELPENFHDEQSFFNCPLIDACFHGTVILYIQKNCKIVTDKVEGLRYYASNIPKNRDEHSSIFIYSTLKSSPSDDLLSSSIVVMLEDGTVIIEVDNLVVKSLTPVKDPLLIETPSDFIYTPYLQSKDSQIQSPLEFKSIYQNNQVDDGLLIPNVVIETIKPLINRKMEFRILEFGGNNLSKSTLLLNEINSLLEENPHYEIDIEYTWSDNNSSILKDAKLELSKVDKGYLSILYRSLGLDVDNSLLEKQKLNPSYYDLIIVSNISNLTKDIEYSLNQIYQILTPNGYLIINEQQQQQQQQQQQQQQQQQQQQQLLNNENNKESLKNLLVNCNFNSDIMIKSSSISDSDIKSIIIQAQKPSLKLQPKTINTFDQVILYCYQDEQLQQQQLINKFENHYNNCKIIKVSTIEEFYKLSTTITNNSIIYFIKSIEQLTLENFKSVTFEYVQINQKLYELKSKCTHVLITCDSQSSNYLSSSVLGAARYFDEIPTLQLFTLDFDKDSLTNDLDLFKTIDYLINPKNNIQREFYIKNSGTVYFEMYKKELKNLKNSYKSESYHDLSKQQDQLVSKLDEHFEYQLNSKQIDLEPYEIEVKVKATGINYKDYLKYNEMIKVNEAGIGFDFSGVVSRVGIKSSKEFKVGDQVYGIAYETSSSHIIIDSLLACHKPSKITHVQAASIPAVYSTSLYCLYDVGNLRDEESVLIHSGSGGVGLSGLEILKSNNHSSPIFVTVGSEEKKQYLINTYGDLITGIYSTRDTNYQKQIKNKLIELGYETHGVDLIINTLSSEFMDTNFKCLNPKGRIVDLTTTHLNPNEFIDNSRYRYNIGYNSIEILKVGKSTIKKLLQSISKSIENETLNALIPITEFSNSNIKKSIESIKERKHVGKIVISHDTDIIDKLIEKESMIDYSILKSDYKIKNLGKNVLVTGQTGLILEVLKWITKYNSTVENIIILSKSSLKWELEFLMNYNNNNNNNNNNNKIKYHFKKCDISNWNLINKTIDQVLKDNPTITNIDSIFHFAALQINKKLKDIDMNSLNVSHSAKTFGAVNLHNLSIKRDWKIINFILASSVVSVLGSFDQCSYVSACCVVDSLSQYRKSIGLPSFTINIGGVSDRGYLSRHKLVEAVLGGQGVELISPNQLLGTLDLQIQNPNMPTNAFVNNFNWPLFKSFKQKLHQKFDFILNPINVDNSISMENDTNQSSSSTNVKNKFLNKVSELLSIDPSKINTNIKMINYGADSLITVQLKNWVDKEWSPHLITIQQIQSNSIGMVYQIINDSLDKKKKEMDEKLLPITAKTTTTTKNDPNDKTEYKYIAGGDCCREFSIKFHYSSVVNFII</sequence>
<dbReference type="EC" id="2.3.1.-"/>
<dbReference type="EMBL" id="AAFI02000096">
    <property type="protein sequence ID" value="EAL63924.1"/>
    <property type="molecule type" value="Genomic_DNA"/>
</dbReference>
<dbReference type="RefSeq" id="XP_637425.1">
    <property type="nucleotide sequence ID" value="XM_632333.1"/>
</dbReference>
<dbReference type="SMR" id="Q54KU5"/>
<dbReference type="STRING" id="44689.Q54KU5"/>
<dbReference type="GlyGen" id="Q54KU5">
    <property type="glycosylation" value="1 site"/>
</dbReference>
<dbReference type="PaxDb" id="44689-DDB0230081"/>
<dbReference type="EnsemblProtists" id="EAL63924">
    <property type="protein sequence ID" value="EAL63924"/>
    <property type="gene ID" value="DDB_G0287119"/>
</dbReference>
<dbReference type="GeneID" id="8625958"/>
<dbReference type="KEGG" id="ddi:DDB_G0287119"/>
<dbReference type="dictyBase" id="DDB_G0287119">
    <property type="gene designation" value="pks24"/>
</dbReference>
<dbReference type="VEuPathDB" id="AmoebaDB:DDB_G0287119"/>
<dbReference type="eggNOG" id="KOG1202">
    <property type="taxonomic scope" value="Eukaryota"/>
</dbReference>
<dbReference type="HOGENOM" id="CLU_000022_31_0_1"/>
<dbReference type="InParanoid" id="Q54KU5"/>
<dbReference type="PhylomeDB" id="Q54KU5"/>
<dbReference type="PRO" id="PR:Q54KU5"/>
<dbReference type="Proteomes" id="UP000002195">
    <property type="component" value="Chromosome 4"/>
</dbReference>
<dbReference type="GO" id="GO:0004315">
    <property type="term" value="F:3-oxoacyl-[acyl-carrier-protein] synthase activity"/>
    <property type="evidence" value="ECO:0007669"/>
    <property type="project" value="InterPro"/>
</dbReference>
<dbReference type="GO" id="GO:0016491">
    <property type="term" value="F:oxidoreductase activity"/>
    <property type="evidence" value="ECO:0007669"/>
    <property type="project" value="InterPro"/>
</dbReference>
<dbReference type="GO" id="GO:0006633">
    <property type="term" value="P:fatty acid biosynthetic process"/>
    <property type="evidence" value="ECO:0000318"/>
    <property type="project" value="GO_Central"/>
</dbReference>
<dbReference type="CDD" id="cd05195">
    <property type="entry name" value="enoyl_red"/>
    <property type="match status" value="1"/>
</dbReference>
<dbReference type="CDD" id="cd08954">
    <property type="entry name" value="KR_1_FAS_SDR_x"/>
    <property type="match status" value="1"/>
</dbReference>
<dbReference type="CDD" id="cd00833">
    <property type="entry name" value="PKS"/>
    <property type="match status" value="1"/>
</dbReference>
<dbReference type="Gene3D" id="3.30.70.3290">
    <property type="match status" value="1"/>
</dbReference>
<dbReference type="Gene3D" id="3.40.47.10">
    <property type="match status" value="1"/>
</dbReference>
<dbReference type="Gene3D" id="3.40.366.10">
    <property type="entry name" value="Malonyl-Coenzyme A Acyl Carrier Protein, domain 2"/>
    <property type="match status" value="1"/>
</dbReference>
<dbReference type="Gene3D" id="3.90.180.10">
    <property type="entry name" value="Medium-chain alcohol dehydrogenases, catalytic domain"/>
    <property type="match status" value="1"/>
</dbReference>
<dbReference type="Gene3D" id="3.40.50.720">
    <property type="entry name" value="NAD(P)-binding Rossmann-like Domain"/>
    <property type="match status" value="2"/>
</dbReference>
<dbReference type="Gene3D" id="3.10.129.110">
    <property type="entry name" value="Polyketide synthase dehydratase"/>
    <property type="match status" value="1"/>
</dbReference>
<dbReference type="Gene3D" id="3.40.50.150">
    <property type="entry name" value="Vaccinia Virus protein VP39"/>
    <property type="match status" value="1"/>
</dbReference>
<dbReference type="InterPro" id="IPR001227">
    <property type="entry name" value="Ac_transferase_dom_sf"/>
</dbReference>
<dbReference type="InterPro" id="IPR036736">
    <property type="entry name" value="ACP-like_sf"/>
</dbReference>
<dbReference type="InterPro" id="IPR014043">
    <property type="entry name" value="Acyl_transferase_dom"/>
</dbReference>
<dbReference type="InterPro" id="IPR016035">
    <property type="entry name" value="Acyl_Trfase/lysoPLipase"/>
</dbReference>
<dbReference type="InterPro" id="IPR013154">
    <property type="entry name" value="ADH-like_N"/>
</dbReference>
<dbReference type="InterPro" id="IPR011032">
    <property type="entry name" value="GroES-like_sf"/>
</dbReference>
<dbReference type="InterPro" id="IPR018201">
    <property type="entry name" value="Ketoacyl_synth_AS"/>
</dbReference>
<dbReference type="InterPro" id="IPR014031">
    <property type="entry name" value="Ketoacyl_synth_C"/>
</dbReference>
<dbReference type="InterPro" id="IPR014030">
    <property type="entry name" value="Ketoacyl_synth_N"/>
</dbReference>
<dbReference type="InterPro" id="IPR016036">
    <property type="entry name" value="Malonyl_transacylase_ACP-bd"/>
</dbReference>
<dbReference type="InterPro" id="IPR036291">
    <property type="entry name" value="NAD(P)-bd_dom_sf"/>
</dbReference>
<dbReference type="InterPro" id="IPR032821">
    <property type="entry name" value="PKS_assoc"/>
</dbReference>
<dbReference type="InterPro" id="IPR020841">
    <property type="entry name" value="PKS_Beta-ketoAc_synthase_dom"/>
</dbReference>
<dbReference type="InterPro" id="IPR042104">
    <property type="entry name" value="PKS_dehydratase_sf"/>
</dbReference>
<dbReference type="InterPro" id="IPR020843">
    <property type="entry name" value="PKS_ER"/>
</dbReference>
<dbReference type="InterPro" id="IPR013968">
    <property type="entry name" value="PKS_KR"/>
</dbReference>
<dbReference type="InterPro" id="IPR049900">
    <property type="entry name" value="PKS_mFAS_DH"/>
</dbReference>
<dbReference type="InterPro" id="IPR050444">
    <property type="entry name" value="Polyketide_Synthase"/>
</dbReference>
<dbReference type="InterPro" id="IPR009081">
    <property type="entry name" value="PP-bd_ACP"/>
</dbReference>
<dbReference type="InterPro" id="IPR029063">
    <property type="entry name" value="SAM-dependent_MTases_sf"/>
</dbReference>
<dbReference type="InterPro" id="IPR016039">
    <property type="entry name" value="Thiolase-like"/>
</dbReference>
<dbReference type="PANTHER" id="PTHR45681:SF4">
    <property type="entry name" value="BETA-KETOACYL SYNTHASE FAMILY PROTEIN-RELATED"/>
    <property type="match status" value="1"/>
</dbReference>
<dbReference type="PANTHER" id="PTHR45681">
    <property type="entry name" value="POLYKETIDE SYNTHASE 44-RELATED"/>
    <property type="match status" value="1"/>
</dbReference>
<dbReference type="Pfam" id="PF23297">
    <property type="entry name" value="ACP_SdgA_C"/>
    <property type="match status" value="1"/>
</dbReference>
<dbReference type="Pfam" id="PF00698">
    <property type="entry name" value="Acyl_transf_1"/>
    <property type="match status" value="1"/>
</dbReference>
<dbReference type="Pfam" id="PF08240">
    <property type="entry name" value="ADH_N"/>
    <property type="match status" value="1"/>
</dbReference>
<dbReference type="Pfam" id="PF13602">
    <property type="entry name" value="ADH_zinc_N_2"/>
    <property type="match status" value="1"/>
</dbReference>
<dbReference type="Pfam" id="PF16197">
    <property type="entry name" value="KAsynt_C_assoc"/>
    <property type="match status" value="1"/>
</dbReference>
<dbReference type="Pfam" id="PF00109">
    <property type="entry name" value="ketoacyl-synt"/>
    <property type="match status" value="1"/>
</dbReference>
<dbReference type="Pfam" id="PF02801">
    <property type="entry name" value="Ketoacyl-synt_C"/>
    <property type="match status" value="1"/>
</dbReference>
<dbReference type="Pfam" id="PF08659">
    <property type="entry name" value="KR"/>
    <property type="match status" value="1"/>
</dbReference>
<dbReference type="SMART" id="SM00827">
    <property type="entry name" value="PKS_AT"/>
    <property type="match status" value="1"/>
</dbReference>
<dbReference type="SMART" id="SM00829">
    <property type="entry name" value="PKS_ER"/>
    <property type="match status" value="1"/>
</dbReference>
<dbReference type="SMART" id="SM00822">
    <property type="entry name" value="PKS_KR"/>
    <property type="match status" value="1"/>
</dbReference>
<dbReference type="SMART" id="SM00825">
    <property type="entry name" value="PKS_KS"/>
    <property type="match status" value="1"/>
</dbReference>
<dbReference type="SUPFAM" id="SSF47336">
    <property type="entry name" value="ACP-like"/>
    <property type="match status" value="1"/>
</dbReference>
<dbReference type="SUPFAM" id="SSF52151">
    <property type="entry name" value="FabD/lysophospholipase-like"/>
    <property type="match status" value="1"/>
</dbReference>
<dbReference type="SUPFAM" id="SSF50129">
    <property type="entry name" value="GroES-like"/>
    <property type="match status" value="1"/>
</dbReference>
<dbReference type="SUPFAM" id="SSF51735">
    <property type="entry name" value="NAD(P)-binding Rossmann-fold domains"/>
    <property type="match status" value="2"/>
</dbReference>
<dbReference type="SUPFAM" id="SSF55048">
    <property type="entry name" value="Probable ACP-binding domain of malonyl-CoA ACP transacylase"/>
    <property type="match status" value="1"/>
</dbReference>
<dbReference type="SUPFAM" id="SSF53335">
    <property type="entry name" value="S-adenosyl-L-methionine-dependent methyltransferases"/>
    <property type="match status" value="1"/>
</dbReference>
<dbReference type="SUPFAM" id="SSF53901">
    <property type="entry name" value="Thiolase-like"/>
    <property type="match status" value="1"/>
</dbReference>
<dbReference type="PROSITE" id="PS50075">
    <property type="entry name" value="CARRIER"/>
    <property type="match status" value="1"/>
</dbReference>
<dbReference type="PROSITE" id="PS00606">
    <property type="entry name" value="KS3_1"/>
    <property type="match status" value="1"/>
</dbReference>
<dbReference type="PROSITE" id="PS52004">
    <property type="entry name" value="KS3_2"/>
    <property type="match status" value="1"/>
</dbReference>
<dbReference type="PROSITE" id="PS52019">
    <property type="entry name" value="PKS_MFAS_DH"/>
    <property type="match status" value="1"/>
</dbReference>
<feature type="chain" id="PRO_0000367830" description="Probable polyketide synthase 24">
    <location>
        <begin position="1"/>
        <end position="2471"/>
    </location>
</feature>
<feature type="domain" description="Ketosynthase family 3 (KS3)" evidence="4">
    <location>
        <begin position="21"/>
        <end position="449"/>
    </location>
</feature>
<feature type="domain" description="PKS/mFAS DH" evidence="5">
    <location>
        <begin position="953"/>
        <end position="1245"/>
    </location>
</feature>
<feature type="domain" description="Carrier" evidence="3">
    <location>
        <begin position="2336"/>
        <end position="2413"/>
    </location>
</feature>
<feature type="region of interest" description="Acyl/malonyl transferase">
    <location>
        <begin position="654"/>
        <end position="687"/>
    </location>
</feature>
<feature type="region of interest" description="N-terminal hotdog fold" evidence="5">
    <location>
        <begin position="953"/>
        <end position="1075"/>
    </location>
</feature>
<feature type="region of interest" description="C-terminal hotdog fold" evidence="5">
    <location>
        <begin position="1094"/>
        <end position="1245"/>
    </location>
</feature>
<feature type="coiled-coil region" evidence="2">
    <location>
        <begin position="1426"/>
        <end position="1469"/>
    </location>
</feature>
<feature type="active site" description="For beta-ketoacyl synthase activity" evidence="4">
    <location>
        <position position="190"/>
    </location>
</feature>
<feature type="active site" description="For beta-ketoacyl synthase activity" evidence="4">
    <location>
        <position position="332"/>
    </location>
</feature>
<feature type="active site" description="For beta-ketoacyl synthase activity" evidence="4">
    <location>
        <position position="372"/>
    </location>
</feature>
<feature type="active site" description="For acyl/malonyl transferase activity" evidence="6">
    <location>
        <position position="664"/>
    </location>
</feature>
<feature type="active site" description="Proton acceptor; for dehydratase activity" evidence="5">
    <location>
        <position position="987"/>
    </location>
</feature>
<feature type="active site" description="Proton donor; for dehydratase activity" evidence="5">
    <location>
        <position position="1157"/>
    </location>
</feature>
<feature type="modified residue" description="O-(pantetheine 4'-phosphoryl)serine" evidence="3">
    <location>
        <position position="2373"/>
    </location>
</feature>
<proteinExistence type="inferred from homology"/>